<organism>
    <name type="scientific">Escherichia phage N15</name>
    <name type="common">Bacteriophage N15</name>
    <dbReference type="NCBI Taxonomy" id="1604876"/>
    <lineage>
        <taxon>Viruses</taxon>
        <taxon>Duplodnaviria</taxon>
        <taxon>Heunggongvirae</taxon>
        <taxon>Uroviricota</taxon>
        <taxon>Caudoviricetes</taxon>
        <taxon>Ravinvirus</taxon>
        <taxon>Ravinvirus N15</taxon>
    </lineage>
</organism>
<reference key="1">
    <citation type="journal article" date="2000" name="J. Mol. Biol.">
        <title>Genomic sequence and analysis of the atypical temperate bacteriophage N15.</title>
        <authorList>
            <person name="Ravin V."/>
            <person name="Ravin N."/>
            <person name="Casjens S."/>
            <person name="Ford M.E."/>
            <person name="Hatfull G.F."/>
            <person name="Hendrix R.W."/>
        </authorList>
    </citation>
    <scope>NUCLEOTIDE SEQUENCE [GENOMIC DNA]</scope>
</reference>
<comment type="similarity">
    <text evidence="2">To E.coli rzpQ.</text>
</comment>
<sequence length="181" mass="19542">MNPSPLIAAIKAWWKPLFVLIFAASAFIAGNVWSNRAWEKRWADRDSAESSQKVNAQTAARMIEQGRIIARDEAVKNAKEKAAAARDASARLAGTVSQLQQQARKLATRLDAAKHTADLAAAVRGKTAGANAAVLADMLGSLAAEAKYYAERSDESYRAGMTCQRIYDSVRESNNQSGASQ</sequence>
<keyword id="KW-1185">Reference proteome</keyword>
<keyword id="KW-0732">Signal</keyword>
<protein>
    <recommendedName>
        <fullName>Protein gp55</fullName>
    </recommendedName>
</protein>
<dbReference type="EMBL" id="AF064539">
    <property type="protein sequence ID" value="AAC19092.1"/>
    <property type="molecule type" value="Genomic_DNA"/>
</dbReference>
<dbReference type="PIR" id="T13142">
    <property type="entry name" value="T13142"/>
</dbReference>
<dbReference type="SMR" id="O64363"/>
<dbReference type="KEGG" id="vg:1261693"/>
<dbReference type="Proteomes" id="UP000002132">
    <property type="component" value="Genome"/>
</dbReference>
<dbReference type="InterPro" id="IPR019659">
    <property type="entry name" value="DUF2514"/>
</dbReference>
<dbReference type="Pfam" id="PF10721">
    <property type="entry name" value="DUF2514"/>
    <property type="match status" value="1"/>
</dbReference>
<evidence type="ECO:0000255" key="1"/>
<evidence type="ECO:0000305" key="2"/>
<name>VG55_BPN15</name>
<accession>O64363</accession>
<feature type="signal peptide" evidence="1">
    <location>
        <begin position="1"/>
        <end position="26"/>
    </location>
</feature>
<feature type="chain" id="PRO_0000013847" description="Protein gp55">
    <location>
        <begin position="27"/>
        <end position="181"/>
    </location>
</feature>
<gene>
    <name type="primary">55</name>
</gene>
<organismHost>
    <name type="scientific">Escherichia coli</name>
    <dbReference type="NCBI Taxonomy" id="562"/>
</organismHost>
<proteinExistence type="inferred from homology"/>